<name>ENSA_CHICK</name>
<gene>
    <name type="primary">ENSA</name>
    <name type="ORF">RCJMB04_26n22</name>
</gene>
<comment type="function">
    <text evidence="1">Protein phosphatase inhibitor that specifically inhibits protein phosphatase 2A (PP2A) during mitosis. When phosphorylated at Ser-67 during mitosis, specifically interacts with PPP2R2D (PR55-delta) and inhibits its activity, leading to inactivation of PP2A, an essential condition to keep cyclin-B1-CDK1 activity high during M phase (By similarity).</text>
</comment>
<comment type="subcellular location">
    <subcellularLocation>
        <location evidence="1">Cytoplasm</location>
    </subcellularLocation>
</comment>
<comment type="PTM">
    <text evidence="1">Phosphorylation at Ser-67 by GWL during mitosis is essential for interaction with PPP2R2D (PR55-delta) and subsequent inactivation of PP2A.</text>
</comment>
<comment type="similarity">
    <text evidence="3">Belongs to the endosulfine family.</text>
</comment>
<accession>Q5ZIF8</accession>
<sequence>MAAPLGTGARAEDSGQEKQDSQEKETVIPERAEEAKLKAKYPNLGQKPGGSDFLMKRLQKGQKYFDSGDYNMAKAKMKNKQLPTAGPDKNLVTGDHIPKPQDLPQRKSSLVASKLAG</sequence>
<reference key="1">
    <citation type="journal article" date="2005" name="Genome Biol.">
        <title>Full-length cDNAs from chicken bursal lymphocytes to facilitate gene function analysis.</title>
        <authorList>
            <person name="Caldwell R.B."/>
            <person name="Kierzek A.M."/>
            <person name="Arakawa H."/>
            <person name="Bezzubov Y."/>
            <person name="Zaim J."/>
            <person name="Fiedler P."/>
            <person name="Kutter S."/>
            <person name="Blagodatski A."/>
            <person name="Kostovska D."/>
            <person name="Koter M."/>
            <person name="Plachy J."/>
            <person name="Carninci P."/>
            <person name="Hayashizaki Y."/>
            <person name="Buerstedde J.-M."/>
        </authorList>
    </citation>
    <scope>NUCLEOTIDE SEQUENCE [LARGE SCALE MRNA]</scope>
    <source>
        <strain>CB</strain>
        <tissue>Bursa of Fabricius</tissue>
    </source>
</reference>
<dbReference type="EMBL" id="AJ720826">
    <property type="protein sequence ID" value="CAG32485.1"/>
    <property type="molecule type" value="mRNA"/>
</dbReference>
<dbReference type="RefSeq" id="NP_001007966.1">
    <property type="nucleotide sequence ID" value="NM_001007965.2"/>
</dbReference>
<dbReference type="SMR" id="Q5ZIF8"/>
<dbReference type="FunCoup" id="Q5ZIF8">
    <property type="interactions" value="1893"/>
</dbReference>
<dbReference type="STRING" id="9031.ENSGALP00000052927"/>
<dbReference type="PaxDb" id="9031-ENSGALP00000042251"/>
<dbReference type="Ensembl" id="ENSGALT00010068912.1">
    <property type="protein sequence ID" value="ENSGALP00010042354.1"/>
    <property type="gene ID" value="ENSGALG00010028455.1"/>
</dbReference>
<dbReference type="GeneID" id="425073"/>
<dbReference type="KEGG" id="gga:425073"/>
<dbReference type="CTD" id="2029"/>
<dbReference type="VEuPathDB" id="HostDB:geneid_425073"/>
<dbReference type="eggNOG" id="KOG4076">
    <property type="taxonomic scope" value="Eukaryota"/>
</dbReference>
<dbReference type="GeneTree" id="ENSGT00940000155413"/>
<dbReference type="HOGENOM" id="CLU_125025_0_1_1"/>
<dbReference type="InParanoid" id="Q5ZIF8"/>
<dbReference type="OMA" id="QMAKQNP"/>
<dbReference type="OrthoDB" id="5949865at2759"/>
<dbReference type="PhylomeDB" id="Q5ZIF8"/>
<dbReference type="Reactome" id="R-GGA-2465910">
    <property type="pathway name" value="MASTL Facilitates Mitotic Progression"/>
</dbReference>
<dbReference type="PRO" id="PR:Q5ZIF8"/>
<dbReference type="Proteomes" id="UP000000539">
    <property type="component" value="Chromosome 25"/>
</dbReference>
<dbReference type="Bgee" id="ENSGALG00000037480">
    <property type="expression patterns" value="Expressed in lung and 14 other cell types or tissues"/>
</dbReference>
<dbReference type="GO" id="GO:0005737">
    <property type="term" value="C:cytoplasm"/>
    <property type="evidence" value="ECO:0000318"/>
    <property type="project" value="GO_Central"/>
</dbReference>
<dbReference type="GO" id="GO:0019212">
    <property type="term" value="F:phosphatase inhibitor activity"/>
    <property type="evidence" value="ECO:0000250"/>
    <property type="project" value="UniProtKB"/>
</dbReference>
<dbReference type="GO" id="GO:0019870">
    <property type="term" value="F:potassium channel inhibitor activity"/>
    <property type="evidence" value="ECO:0007669"/>
    <property type="project" value="Ensembl"/>
</dbReference>
<dbReference type="GO" id="GO:0051721">
    <property type="term" value="F:protein phosphatase 2A binding"/>
    <property type="evidence" value="ECO:0000250"/>
    <property type="project" value="UniProtKB"/>
</dbReference>
<dbReference type="GO" id="GO:0004864">
    <property type="term" value="F:protein phosphatase inhibitor activity"/>
    <property type="evidence" value="ECO:0000318"/>
    <property type="project" value="GO_Central"/>
</dbReference>
<dbReference type="GO" id="GO:0019888">
    <property type="term" value="F:protein phosphatase regulator activity"/>
    <property type="evidence" value="ECO:0000250"/>
    <property type="project" value="UniProtKB"/>
</dbReference>
<dbReference type="GO" id="GO:0005102">
    <property type="term" value="F:signaling receptor binding"/>
    <property type="evidence" value="ECO:0007669"/>
    <property type="project" value="Ensembl"/>
</dbReference>
<dbReference type="GO" id="GO:0051301">
    <property type="term" value="P:cell division"/>
    <property type="evidence" value="ECO:0007669"/>
    <property type="project" value="UniProtKB-KW"/>
</dbReference>
<dbReference type="GO" id="GO:0000086">
    <property type="term" value="P:G2/M transition of mitotic cell cycle"/>
    <property type="evidence" value="ECO:0000250"/>
    <property type="project" value="UniProtKB"/>
</dbReference>
<dbReference type="GO" id="GO:0000278">
    <property type="term" value="P:mitotic cell cycle"/>
    <property type="evidence" value="ECO:0000250"/>
    <property type="project" value="UniProtKB"/>
</dbReference>
<dbReference type="GO" id="GO:0050796">
    <property type="term" value="P:regulation of insulin secretion"/>
    <property type="evidence" value="ECO:0007669"/>
    <property type="project" value="Ensembl"/>
</dbReference>
<dbReference type="InterPro" id="IPR006760">
    <property type="entry name" value="Endosulphine"/>
</dbReference>
<dbReference type="PANTHER" id="PTHR10358:SF21">
    <property type="entry name" value="ALPHA-ENDOSULFINE"/>
    <property type="match status" value="1"/>
</dbReference>
<dbReference type="PANTHER" id="PTHR10358">
    <property type="entry name" value="ENDOSULFINE"/>
    <property type="match status" value="1"/>
</dbReference>
<dbReference type="Pfam" id="PF04667">
    <property type="entry name" value="Endosulfine"/>
    <property type="match status" value="1"/>
</dbReference>
<proteinExistence type="inferred from homology"/>
<protein>
    <recommendedName>
        <fullName>Alpha-endosulfine</fullName>
    </recommendedName>
</protein>
<evidence type="ECO:0000250" key="1"/>
<evidence type="ECO:0000256" key="2">
    <source>
        <dbReference type="SAM" id="MobiDB-lite"/>
    </source>
</evidence>
<evidence type="ECO:0000305" key="3"/>
<feature type="chain" id="PRO_0000371563" description="Alpha-endosulfine">
    <location>
        <begin position="1"/>
        <end position="117"/>
    </location>
</feature>
<feature type="region of interest" description="Disordered" evidence="2">
    <location>
        <begin position="1"/>
        <end position="53"/>
    </location>
</feature>
<feature type="region of interest" description="Disordered" evidence="2">
    <location>
        <begin position="76"/>
        <end position="117"/>
    </location>
</feature>
<feature type="compositionally biased region" description="Basic and acidic residues" evidence="2">
    <location>
        <begin position="10"/>
        <end position="37"/>
    </location>
</feature>
<feature type="modified residue" description="Phosphoserine; by GWL" evidence="1">
    <location>
        <position position="67"/>
    </location>
</feature>
<organism>
    <name type="scientific">Gallus gallus</name>
    <name type="common">Chicken</name>
    <dbReference type="NCBI Taxonomy" id="9031"/>
    <lineage>
        <taxon>Eukaryota</taxon>
        <taxon>Metazoa</taxon>
        <taxon>Chordata</taxon>
        <taxon>Craniata</taxon>
        <taxon>Vertebrata</taxon>
        <taxon>Euteleostomi</taxon>
        <taxon>Archelosauria</taxon>
        <taxon>Archosauria</taxon>
        <taxon>Dinosauria</taxon>
        <taxon>Saurischia</taxon>
        <taxon>Theropoda</taxon>
        <taxon>Coelurosauria</taxon>
        <taxon>Aves</taxon>
        <taxon>Neognathae</taxon>
        <taxon>Galloanserae</taxon>
        <taxon>Galliformes</taxon>
        <taxon>Phasianidae</taxon>
        <taxon>Phasianinae</taxon>
        <taxon>Gallus</taxon>
    </lineage>
</organism>
<keyword id="KW-0131">Cell cycle</keyword>
<keyword id="KW-0132">Cell division</keyword>
<keyword id="KW-0963">Cytoplasm</keyword>
<keyword id="KW-0498">Mitosis</keyword>
<keyword id="KW-0597">Phosphoprotein</keyword>
<keyword id="KW-0650">Protein phosphatase inhibitor</keyword>
<keyword id="KW-1185">Reference proteome</keyword>